<proteinExistence type="inferred from homology"/>
<sequence>MVAVTEQTNVGKITQVIGPVVDAEFPSGKLPRIYNALKIQGKNPAGNDVSVTCEVQQLLGDNQVRAVAMSGTDGLVRGMDIVDTGAPISVPVGKVTLGRIFNVLGEPVDEKGDVDMSLTSPIHRPAPKLIDLETKPKVFETGIKVIDLLTPYRQGGKIGLFGGAGVGKTVIMMELINNIAINHGGVSVFAGVGERTREGNDLYNEMIESKVINPDNPEESKIALVYGQMNEPPGARMRVGLSGLTMAEYFRDVNKQDVLLFVDNIFRFVQAGSEVSALLGRMPSAVGYQPTLGTDVGDLQERITSTKEGSITSVQAVYVPADDLTDPAPATTFAHLDGTTVLSRGLASKGIYPAVDPLDSTSTMLQPGIVGEEHYNTARAVQSTLQRYKELQDIIAILGLDELSEEDRRTVDRARKIERFLSQPFFVAEVFTGSPGKYVTLKDTIKGFQMILNGELDDLPEQAFYLVGDIEEAKAKAEKLKKG</sequence>
<gene>
    <name evidence="1" type="primary">atpD</name>
    <name evidence="1" type="synonym">atpB</name>
    <name type="ordered locus">PCC8801_3657</name>
</gene>
<dbReference type="EC" id="7.1.2.2" evidence="1"/>
<dbReference type="EMBL" id="CP001287">
    <property type="protein sequence ID" value="ACK67619.1"/>
    <property type="molecule type" value="Genomic_DNA"/>
</dbReference>
<dbReference type="RefSeq" id="WP_012596877.1">
    <property type="nucleotide sequence ID" value="NC_011726.1"/>
</dbReference>
<dbReference type="SMR" id="B7K2R8"/>
<dbReference type="STRING" id="41431.PCC8801_3657"/>
<dbReference type="KEGG" id="cyp:PCC8801_3657"/>
<dbReference type="eggNOG" id="COG0055">
    <property type="taxonomic scope" value="Bacteria"/>
</dbReference>
<dbReference type="HOGENOM" id="CLU_022398_0_2_3"/>
<dbReference type="OrthoDB" id="9801639at2"/>
<dbReference type="Proteomes" id="UP000008204">
    <property type="component" value="Chromosome"/>
</dbReference>
<dbReference type="GO" id="GO:0031676">
    <property type="term" value="C:plasma membrane-derived thylakoid membrane"/>
    <property type="evidence" value="ECO:0007669"/>
    <property type="project" value="UniProtKB-SubCell"/>
</dbReference>
<dbReference type="GO" id="GO:0045259">
    <property type="term" value="C:proton-transporting ATP synthase complex"/>
    <property type="evidence" value="ECO:0007669"/>
    <property type="project" value="UniProtKB-KW"/>
</dbReference>
<dbReference type="GO" id="GO:0005524">
    <property type="term" value="F:ATP binding"/>
    <property type="evidence" value="ECO:0007669"/>
    <property type="project" value="UniProtKB-UniRule"/>
</dbReference>
<dbReference type="GO" id="GO:0016887">
    <property type="term" value="F:ATP hydrolysis activity"/>
    <property type="evidence" value="ECO:0007669"/>
    <property type="project" value="InterPro"/>
</dbReference>
<dbReference type="GO" id="GO:0046933">
    <property type="term" value="F:proton-transporting ATP synthase activity, rotational mechanism"/>
    <property type="evidence" value="ECO:0007669"/>
    <property type="project" value="UniProtKB-UniRule"/>
</dbReference>
<dbReference type="CDD" id="cd18110">
    <property type="entry name" value="ATP-synt_F1_beta_C"/>
    <property type="match status" value="1"/>
</dbReference>
<dbReference type="CDD" id="cd18115">
    <property type="entry name" value="ATP-synt_F1_beta_N"/>
    <property type="match status" value="1"/>
</dbReference>
<dbReference type="CDD" id="cd01133">
    <property type="entry name" value="F1-ATPase_beta_CD"/>
    <property type="match status" value="1"/>
</dbReference>
<dbReference type="FunFam" id="1.10.1140.10:FF:000001">
    <property type="entry name" value="ATP synthase subunit beta"/>
    <property type="match status" value="1"/>
</dbReference>
<dbReference type="FunFam" id="3.40.50.300:FF:000004">
    <property type="entry name" value="ATP synthase subunit beta"/>
    <property type="match status" value="1"/>
</dbReference>
<dbReference type="FunFam" id="2.40.10.170:FF:000002">
    <property type="entry name" value="ATP synthase subunit beta, chloroplastic"/>
    <property type="match status" value="1"/>
</dbReference>
<dbReference type="Gene3D" id="2.40.10.170">
    <property type="match status" value="1"/>
</dbReference>
<dbReference type="Gene3D" id="1.10.1140.10">
    <property type="entry name" value="Bovine Mitochondrial F1-atpase, Atp Synthase Beta Chain, Chain D, domain 3"/>
    <property type="match status" value="1"/>
</dbReference>
<dbReference type="Gene3D" id="3.40.50.300">
    <property type="entry name" value="P-loop containing nucleotide triphosphate hydrolases"/>
    <property type="match status" value="1"/>
</dbReference>
<dbReference type="HAMAP" id="MF_01347">
    <property type="entry name" value="ATP_synth_beta_bact"/>
    <property type="match status" value="1"/>
</dbReference>
<dbReference type="InterPro" id="IPR003593">
    <property type="entry name" value="AAA+_ATPase"/>
</dbReference>
<dbReference type="InterPro" id="IPR055190">
    <property type="entry name" value="ATP-synt_VA_C"/>
</dbReference>
<dbReference type="InterPro" id="IPR005722">
    <property type="entry name" value="ATP_synth_F1_bsu"/>
</dbReference>
<dbReference type="InterPro" id="IPR020003">
    <property type="entry name" value="ATPase_a/bsu_AS"/>
</dbReference>
<dbReference type="InterPro" id="IPR050053">
    <property type="entry name" value="ATPase_alpha/beta_chains"/>
</dbReference>
<dbReference type="InterPro" id="IPR004100">
    <property type="entry name" value="ATPase_F1/V1/A1_a/bsu_N"/>
</dbReference>
<dbReference type="InterPro" id="IPR036121">
    <property type="entry name" value="ATPase_F1/V1/A1_a/bsu_N_sf"/>
</dbReference>
<dbReference type="InterPro" id="IPR000194">
    <property type="entry name" value="ATPase_F1/V1/A1_a/bsu_nucl-bd"/>
</dbReference>
<dbReference type="InterPro" id="IPR024034">
    <property type="entry name" value="ATPase_F1/V1_b/a_C"/>
</dbReference>
<dbReference type="InterPro" id="IPR027417">
    <property type="entry name" value="P-loop_NTPase"/>
</dbReference>
<dbReference type="NCBIfam" id="TIGR01039">
    <property type="entry name" value="atpD"/>
    <property type="match status" value="1"/>
</dbReference>
<dbReference type="PANTHER" id="PTHR15184">
    <property type="entry name" value="ATP SYNTHASE"/>
    <property type="match status" value="1"/>
</dbReference>
<dbReference type="PANTHER" id="PTHR15184:SF71">
    <property type="entry name" value="ATP SYNTHASE SUBUNIT BETA, MITOCHONDRIAL"/>
    <property type="match status" value="1"/>
</dbReference>
<dbReference type="Pfam" id="PF00006">
    <property type="entry name" value="ATP-synt_ab"/>
    <property type="match status" value="1"/>
</dbReference>
<dbReference type="Pfam" id="PF02874">
    <property type="entry name" value="ATP-synt_ab_N"/>
    <property type="match status" value="1"/>
</dbReference>
<dbReference type="Pfam" id="PF22919">
    <property type="entry name" value="ATP-synt_VA_C"/>
    <property type="match status" value="1"/>
</dbReference>
<dbReference type="SMART" id="SM00382">
    <property type="entry name" value="AAA"/>
    <property type="match status" value="1"/>
</dbReference>
<dbReference type="SUPFAM" id="SSF47917">
    <property type="entry name" value="C-terminal domain of alpha and beta subunits of F1 ATP synthase"/>
    <property type="match status" value="1"/>
</dbReference>
<dbReference type="SUPFAM" id="SSF50615">
    <property type="entry name" value="N-terminal domain of alpha and beta subunits of F1 ATP synthase"/>
    <property type="match status" value="1"/>
</dbReference>
<dbReference type="SUPFAM" id="SSF52540">
    <property type="entry name" value="P-loop containing nucleoside triphosphate hydrolases"/>
    <property type="match status" value="1"/>
</dbReference>
<dbReference type="PROSITE" id="PS00152">
    <property type="entry name" value="ATPASE_ALPHA_BETA"/>
    <property type="match status" value="1"/>
</dbReference>
<name>ATPB_RIPO1</name>
<accession>B7K2R8</accession>
<protein>
    <recommendedName>
        <fullName evidence="1">ATP synthase subunit beta</fullName>
        <ecNumber evidence="1">7.1.2.2</ecNumber>
    </recommendedName>
    <alternativeName>
        <fullName evidence="1">ATP synthase F1 sector subunit beta</fullName>
    </alternativeName>
    <alternativeName>
        <fullName evidence="1">F-ATPase subunit beta</fullName>
    </alternativeName>
</protein>
<reference key="1">
    <citation type="journal article" date="2011" name="MBio">
        <title>Novel metabolic attributes of the genus Cyanothece, comprising a group of unicellular nitrogen-fixing Cyanobacteria.</title>
        <authorList>
            <person name="Bandyopadhyay A."/>
            <person name="Elvitigala T."/>
            <person name="Welsh E."/>
            <person name="Stockel J."/>
            <person name="Liberton M."/>
            <person name="Min H."/>
            <person name="Sherman L.A."/>
            <person name="Pakrasi H.B."/>
        </authorList>
    </citation>
    <scope>NUCLEOTIDE SEQUENCE [LARGE SCALE GENOMIC DNA]</scope>
    <source>
        <strain>PCC 8801 / RF-1</strain>
    </source>
</reference>
<comment type="function">
    <text evidence="1">Produces ATP from ADP in the presence of a proton gradient across the membrane. The catalytic sites are hosted primarily by the beta subunits.</text>
</comment>
<comment type="catalytic activity">
    <reaction evidence="1">
        <text>ATP + H2O + 4 H(+)(in) = ADP + phosphate + 5 H(+)(out)</text>
        <dbReference type="Rhea" id="RHEA:57720"/>
        <dbReference type="ChEBI" id="CHEBI:15377"/>
        <dbReference type="ChEBI" id="CHEBI:15378"/>
        <dbReference type="ChEBI" id="CHEBI:30616"/>
        <dbReference type="ChEBI" id="CHEBI:43474"/>
        <dbReference type="ChEBI" id="CHEBI:456216"/>
        <dbReference type="EC" id="7.1.2.2"/>
    </reaction>
</comment>
<comment type="subunit">
    <text evidence="1">F-type ATPases have 2 components, CF(1) - the catalytic core - and CF(0) - the membrane proton channel. CF(1) has five subunits: alpha(3), beta(3), gamma(1), delta(1), epsilon(1). CF(0) has four main subunits: a(1), b(1), b'(1) and c(9-12).</text>
</comment>
<comment type="subcellular location">
    <subcellularLocation>
        <location evidence="1">Cellular thylakoid membrane</location>
        <topology evidence="1">Peripheral membrane protein</topology>
    </subcellularLocation>
</comment>
<comment type="similarity">
    <text evidence="1">Belongs to the ATPase alpha/beta chains family.</text>
</comment>
<feature type="chain" id="PRO_1000143493" description="ATP synthase subunit beta">
    <location>
        <begin position="1"/>
        <end position="483"/>
    </location>
</feature>
<feature type="binding site" evidence="1">
    <location>
        <begin position="162"/>
        <end position="169"/>
    </location>
    <ligand>
        <name>ATP</name>
        <dbReference type="ChEBI" id="CHEBI:30616"/>
    </ligand>
</feature>
<organism>
    <name type="scientific">Rippkaea orientalis (strain PCC 8801 / RF-1)</name>
    <name type="common">Cyanothece sp. (strain PCC 8801)</name>
    <dbReference type="NCBI Taxonomy" id="41431"/>
    <lineage>
        <taxon>Bacteria</taxon>
        <taxon>Bacillati</taxon>
        <taxon>Cyanobacteriota</taxon>
        <taxon>Cyanophyceae</taxon>
        <taxon>Oscillatoriophycideae</taxon>
        <taxon>Chroococcales</taxon>
        <taxon>Aphanothecaceae</taxon>
        <taxon>Rippkaea</taxon>
        <taxon>Rippkaea orientalis</taxon>
    </lineage>
</organism>
<evidence type="ECO:0000255" key="1">
    <source>
        <dbReference type="HAMAP-Rule" id="MF_01347"/>
    </source>
</evidence>
<keyword id="KW-0066">ATP synthesis</keyword>
<keyword id="KW-0067">ATP-binding</keyword>
<keyword id="KW-0139">CF(1)</keyword>
<keyword id="KW-0375">Hydrogen ion transport</keyword>
<keyword id="KW-0406">Ion transport</keyword>
<keyword id="KW-0472">Membrane</keyword>
<keyword id="KW-0547">Nucleotide-binding</keyword>
<keyword id="KW-1185">Reference proteome</keyword>
<keyword id="KW-0793">Thylakoid</keyword>
<keyword id="KW-1278">Translocase</keyword>
<keyword id="KW-0813">Transport</keyword>